<dbReference type="EC" id="2.1.1.191" evidence="1"/>
<dbReference type="EMBL" id="BA000031">
    <property type="protein sequence ID" value="BAC59892.1"/>
    <property type="status" value="ALT_INIT"/>
    <property type="molecule type" value="Genomic_DNA"/>
</dbReference>
<dbReference type="RefSeq" id="NP_798008.1">
    <property type="nucleotide sequence ID" value="NC_004603.1"/>
</dbReference>
<dbReference type="RefSeq" id="WP_005477750.1">
    <property type="nucleotide sequence ID" value="NC_004603.1"/>
</dbReference>
<dbReference type="SMR" id="Q87P89"/>
<dbReference type="GeneID" id="1189136"/>
<dbReference type="KEGG" id="vpa:VP1629"/>
<dbReference type="PATRIC" id="fig|223926.6.peg.1552"/>
<dbReference type="eggNOG" id="COG1092">
    <property type="taxonomic scope" value="Bacteria"/>
</dbReference>
<dbReference type="HOGENOM" id="CLU_014042_0_0_6"/>
<dbReference type="Proteomes" id="UP000002493">
    <property type="component" value="Chromosome 1"/>
</dbReference>
<dbReference type="GO" id="GO:0005737">
    <property type="term" value="C:cytoplasm"/>
    <property type="evidence" value="ECO:0007669"/>
    <property type="project" value="UniProtKB-SubCell"/>
</dbReference>
<dbReference type="GO" id="GO:0003723">
    <property type="term" value="F:RNA binding"/>
    <property type="evidence" value="ECO:0007669"/>
    <property type="project" value="UniProtKB-KW"/>
</dbReference>
<dbReference type="GO" id="GO:0016434">
    <property type="term" value="F:rRNA (cytosine) methyltransferase activity"/>
    <property type="evidence" value="ECO:0007669"/>
    <property type="project" value="UniProtKB-UniRule"/>
</dbReference>
<dbReference type="CDD" id="cd02440">
    <property type="entry name" value="AdoMet_MTases"/>
    <property type="match status" value="1"/>
</dbReference>
<dbReference type="CDD" id="cd21153">
    <property type="entry name" value="PUA_RlmI"/>
    <property type="match status" value="1"/>
</dbReference>
<dbReference type="CDD" id="cd11572">
    <property type="entry name" value="RlmI_M_like"/>
    <property type="match status" value="1"/>
</dbReference>
<dbReference type="Gene3D" id="2.30.130.10">
    <property type="entry name" value="PUA domain"/>
    <property type="match status" value="1"/>
</dbReference>
<dbReference type="Gene3D" id="3.30.750.80">
    <property type="entry name" value="RNA methyltransferase domain (HRMD) like"/>
    <property type="match status" value="1"/>
</dbReference>
<dbReference type="Gene3D" id="3.40.50.150">
    <property type="entry name" value="Vaccinia Virus protein VP39"/>
    <property type="match status" value="1"/>
</dbReference>
<dbReference type="HAMAP" id="MF_01857">
    <property type="entry name" value="23SrRNA_methyltr_I"/>
    <property type="match status" value="1"/>
</dbReference>
<dbReference type="InterPro" id="IPR002478">
    <property type="entry name" value="PUA"/>
</dbReference>
<dbReference type="InterPro" id="IPR015947">
    <property type="entry name" value="PUA-like_sf"/>
</dbReference>
<dbReference type="InterPro" id="IPR036974">
    <property type="entry name" value="PUA_sf"/>
</dbReference>
<dbReference type="InterPro" id="IPR023542">
    <property type="entry name" value="RLMI"/>
</dbReference>
<dbReference type="InterPro" id="IPR041532">
    <property type="entry name" value="RlmI-like_PUA"/>
</dbReference>
<dbReference type="InterPro" id="IPR019614">
    <property type="entry name" value="SAM-dep_methyl-trfase"/>
</dbReference>
<dbReference type="InterPro" id="IPR029063">
    <property type="entry name" value="SAM-dependent_MTases_sf"/>
</dbReference>
<dbReference type="PANTHER" id="PTHR42873">
    <property type="entry name" value="RIBOSOMAL RNA LARGE SUBUNIT METHYLTRANSFERASE"/>
    <property type="match status" value="1"/>
</dbReference>
<dbReference type="PANTHER" id="PTHR42873:SF1">
    <property type="entry name" value="S-ADENOSYLMETHIONINE-DEPENDENT METHYLTRANSFERASE DOMAIN-CONTAINING PROTEIN"/>
    <property type="match status" value="1"/>
</dbReference>
<dbReference type="Pfam" id="PF10672">
    <property type="entry name" value="Methyltrans_SAM"/>
    <property type="match status" value="1"/>
</dbReference>
<dbReference type="Pfam" id="PF17785">
    <property type="entry name" value="PUA_3"/>
    <property type="match status" value="1"/>
</dbReference>
<dbReference type="SMART" id="SM00359">
    <property type="entry name" value="PUA"/>
    <property type="match status" value="1"/>
</dbReference>
<dbReference type="SUPFAM" id="SSF88697">
    <property type="entry name" value="PUA domain-like"/>
    <property type="match status" value="1"/>
</dbReference>
<dbReference type="SUPFAM" id="SSF53335">
    <property type="entry name" value="S-adenosyl-L-methionine-dependent methyltransferases"/>
    <property type="match status" value="1"/>
</dbReference>
<dbReference type="PROSITE" id="PS50890">
    <property type="entry name" value="PUA"/>
    <property type="match status" value="1"/>
</dbReference>
<organism>
    <name type="scientific">Vibrio parahaemolyticus serotype O3:K6 (strain RIMD 2210633)</name>
    <dbReference type="NCBI Taxonomy" id="223926"/>
    <lineage>
        <taxon>Bacteria</taxon>
        <taxon>Pseudomonadati</taxon>
        <taxon>Pseudomonadota</taxon>
        <taxon>Gammaproteobacteria</taxon>
        <taxon>Vibrionales</taxon>
        <taxon>Vibrionaceae</taxon>
        <taxon>Vibrio</taxon>
    </lineage>
</organism>
<comment type="function">
    <text evidence="1">Specifically methylates the cytosine at position 1962 (m5C1962) of 23S rRNA.</text>
</comment>
<comment type="catalytic activity">
    <reaction evidence="1">
        <text>cytidine(1962) in 23S rRNA + S-adenosyl-L-methionine = 5-methylcytidine(1962) in 23S rRNA + S-adenosyl-L-homocysteine + H(+)</text>
        <dbReference type="Rhea" id="RHEA:42912"/>
        <dbReference type="Rhea" id="RHEA-COMP:10382"/>
        <dbReference type="Rhea" id="RHEA-COMP:10386"/>
        <dbReference type="ChEBI" id="CHEBI:15378"/>
        <dbReference type="ChEBI" id="CHEBI:57856"/>
        <dbReference type="ChEBI" id="CHEBI:59789"/>
        <dbReference type="ChEBI" id="CHEBI:74483"/>
        <dbReference type="ChEBI" id="CHEBI:82748"/>
        <dbReference type="EC" id="2.1.1.191"/>
    </reaction>
</comment>
<comment type="subcellular location">
    <subcellularLocation>
        <location evidence="1">Cytoplasm</location>
    </subcellularLocation>
</comment>
<comment type="similarity">
    <text evidence="1">Belongs to the methyltransferase superfamily. RlmI family.</text>
</comment>
<comment type="sequence caution" evidence="2">
    <conflict type="erroneous initiation">
        <sequence resource="EMBL-CDS" id="BAC59892"/>
    </conflict>
</comment>
<accession>Q87P89</accession>
<feature type="chain" id="PRO_0000366276" description="Ribosomal RNA large subunit methyltransferase I">
    <location>
        <begin position="1"/>
        <end position="397"/>
    </location>
</feature>
<feature type="domain" description="PUA" evidence="1">
    <location>
        <begin position="2"/>
        <end position="79"/>
    </location>
</feature>
<proteinExistence type="inferred from homology"/>
<name>RLMI_VIBPA</name>
<evidence type="ECO:0000255" key="1">
    <source>
        <dbReference type="HAMAP-Rule" id="MF_01857"/>
    </source>
</evidence>
<evidence type="ECO:0000305" key="2"/>
<reference key="1">
    <citation type="journal article" date="2003" name="Lancet">
        <title>Genome sequence of Vibrio parahaemolyticus: a pathogenic mechanism distinct from that of V. cholerae.</title>
        <authorList>
            <person name="Makino K."/>
            <person name="Oshima K."/>
            <person name="Kurokawa K."/>
            <person name="Yokoyama K."/>
            <person name="Uda T."/>
            <person name="Tagomori K."/>
            <person name="Iijima Y."/>
            <person name="Najima M."/>
            <person name="Nakano M."/>
            <person name="Yamashita A."/>
            <person name="Kubota Y."/>
            <person name="Kimura S."/>
            <person name="Yasunaga T."/>
            <person name="Honda T."/>
            <person name="Shinagawa H."/>
            <person name="Hattori M."/>
            <person name="Iida T."/>
        </authorList>
    </citation>
    <scope>NUCLEOTIDE SEQUENCE [LARGE SCALE GENOMIC DNA]</scope>
    <source>
        <strain>RIMD 2210633</strain>
    </source>
</reference>
<protein>
    <recommendedName>
        <fullName evidence="1">Ribosomal RNA large subunit methyltransferase I</fullName>
        <ecNumber evidence="1">2.1.1.191</ecNumber>
    </recommendedName>
    <alternativeName>
        <fullName evidence="1">23S rRNA m5C1962 methyltransferase</fullName>
    </alternativeName>
    <alternativeName>
        <fullName evidence="1">rRNA (cytosine-C(5)-)-methyltransferase RlmI</fullName>
    </alternativeName>
</protein>
<keyword id="KW-0963">Cytoplasm</keyword>
<keyword id="KW-0489">Methyltransferase</keyword>
<keyword id="KW-0694">RNA-binding</keyword>
<keyword id="KW-0698">rRNA processing</keyword>
<keyword id="KW-0949">S-adenosyl-L-methionine</keyword>
<keyword id="KW-0808">Transferase</keyword>
<gene>
    <name evidence="1" type="primary">rlmI</name>
    <name type="ordered locus">VP1629</name>
</gene>
<sequence>MTAAIYLVKGREKSVKRKHPWIFSRGIGKVEGEPALGETVDVFTHDGKWLAKAAYSPESQIRARIWSFEKEEINKAFFVKRFQNAQLLREDVIERDGLTGYRLIAAESDGLPGVTIDRYQNFFVCQLLSAGAEYNKQAIVDALVECFPDCNVYERSDVAVRKKEGLKETTGVLHGEEPPKSVVIEENGVKISVDIVGGHKTGFYLDQRDSRQQAMKYVKDKEVLNCFSYTGGFGLYALKGGAKRVINADVSQPALDTAKYNAELNEFDISKKRAVFLNADVFKLLREYRDQGTQFDVVIMDPPKFAESKAQLNGACRGYKDINMLALQILKPGGTLLTYSCSGLMDQVLFQKIIADAAVDANRQVKFVERFEQAADHPTDTAYPEGFYLKGFACKVL</sequence>